<reference key="1">
    <citation type="journal article" date="1999" name="Nature">
        <title>Evidence for lateral gene transfer between Archaea and Bacteria from genome sequence of Thermotoga maritima.</title>
        <authorList>
            <person name="Nelson K.E."/>
            <person name="Clayton R.A."/>
            <person name="Gill S.R."/>
            <person name="Gwinn M.L."/>
            <person name="Dodson R.J."/>
            <person name="Haft D.H."/>
            <person name="Hickey E.K."/>
            <person name="Peterson J.D."/>
            <person name="Nelson W.C."/>
            <person name="Ketchum K.A."/>
            <person name="McDonald L.A."/>
            <person name="Utterback T.R."/>
            <person name="Malek J.A."/>
            <person name="Linher K.D."/>
            <person name="Garrett M.M."/>
            <person name="Stewart A.M."/>
            <person name="Cotton M.D."/>
            <person name="Pratt M.S."/>
            <person name="Phillips C.A."/>
            <person name="Richardson D.L."/>
            <person name="Heidelberg J.F."/>
            <person name="Sutton G.G."/>
            <person name="Fleischmann R.D."/>
            <person name="Eisen J.A."/>
            <person name="White O."/>
            <person name="Salzberg S.L."/>
            <person name="Smith H.O."/>
            <person name="Venter J.C."/>
            <person name="Fraser C.M."/>
        </authorList>
    </citation>
    <scope>NUCLEOTIDE SEQUENCE [LARGE SCALE GENOMIC DNA]</scope>
    <source>
        <strain>ATCC 43589 / DSM 3109 / JCM 10099 / NBRC 100826 / MSB8</strain>
    </source>
</reference>
<organism>
    <name type="scientific">Thermotoga maritima (strain ATCC 43589 / DSM 3109 / JCM 10099 / NBRC 100826 / MSB8)</name>
    <dbReference type="NCBI Taxonomy" id="243274"/>
    <lineage>
        <taxon>Bacteria</taxon>
        <taxon>Thermotogati</taxon>
        <taxon>Thermotogota</taxon>
        <taxon>Thermotogae</taxon>
        <taxon>Thermotogales</taxon>
        <taxon>Thermotogaceae</taxon>
        <taxon>Thermotoga</taxon>
    </lineage>
</organism>
<name>RS6_THEMA</name>
<keyword id="KW-0002">3D-structure</keyword>
<keyword id="KW-1185">Reference proteome</keyword>
<keyword id="KW-0687">Ribonucleoprotein</keyword>
<keyword id="KW-0689">Ribosomal protein</keyword>
<keyword id="KW-0694">RNA-binding</keyword>
<keyword id="KW-0699">rRNA-binding</keyword>
<sequence length="128" mass="15369">MAYVKERIYESMFIIAPNVPEEERENLVERVKKIIEERVKGKIDKVERMGMRKFAYEIKKFNEGDYTVIYFRCDGQNLQELENFYRVTPEIIRWQTFRRFDLEKKERKAQREKAAAEATESSEGGSED</sequence>
<feature type="chain" id="PRO_0000176861" description="Small ribosomal subunit protein bS6">
    <location>
        <begin position="1"/>
        <end position="128"/>
    </location>
</feature>
<feature type="strand" evidence="3">
    <location>
        <begin position="7"/>
        <end position="15"/>
    </location>
</feature>
<feature type="helix" evidence="3">
    <location>
        <begin position="21"/>
        <end position="37"/>
    </location>
</feature>
<feature type="strand" evidence="3">
    <location>
        <begin position="42"/>
        <end position="58"/>
    </location>
</feature>
<feature type="strand" evidence="3">
    <location>
        <begin position="61"/>
        <end position="73"/>
    </location>
</feature>
<feature type="strand" evidence="3">
    <location>
        <begin position="75"/>
        <end position="77"/>
    </location>
</feature>
<feature type="helix" evidence="3">
    <location>
        <begin position="79"/>
        <end position="86"/>
    </location>
</feature>
<feature type="strand" evidence="3">
    <location>
        <begin position="91"/>
        <end position="98"/>
    </location>
</feature>
<feature type="helix" evidence="3">
    <location>
        <begin position="100"/>
        <end position="110"/>
    </location>
</feature>
<gene>
    <name type="primary">rpsF</name>
    <name type="ordered locus">TM_0603</name>
</gene>
<accession>Q9WZ72</accession>
<dbReference type="EMBL" id="AE000512">
    <property type="protein sequence ID" value="AAD35688.1"/>
    <property type="molecule type" value="Genomic_DNA"/>
</dbReference>
<dbReference type="PIR" id="G72354">
    <property type="entry name" value="G72354"/>
</dbReference>
<dbReference type="RefSeq" id="NP_228413.1">
    <property type="nucleotide sequence ID" value="NC_000853.1"/>
</dbReference>
<dbReference type="RefSeq" id="WP_004081227.1">
    <property type="nucleotide sequence ID" value="NC_000853.1"/>
</dbReference>
<dbReference type="PDB" id="1VMB">
    <property type="method" value="X-ray"/>
    <property type="resolution" value="1.70 A"/>
    <property type="chains" value="A=1-128"/>
</dbReference>
<dbReference type="PDBsum" id="1VMB"/>
<dbReference type="SMR" id="Q9WZ72"/>
<dbReference type="FunCoup" id="Q9WZ72">
    <property type="interactions" value="334"/>
</dbReference>
<dbReference type="STRING" id="243274.TM_0603"/>
<dbReference type="PaxDb" id="243274-THEMA_01650"/>
<dbReference type="EnsemblBacteria" id="AAD35688">
    <property type="protein sequence ID" value="AAD35688"/>
    <property type="gene ID" value="TM_0603"/>
</dbReference>
<dbReference type="KEGG" id="tma:TM0603"/>
<dbReference type="KEGG" id="tmi:THEMA_01650"/>
<dbReference type="KEGG" id="tmm:Tmari_0603"/>
<dbReference type="KEGG" id="tmw:THMA_0619"/>
<dbReference type="eggNOG" id="COG0360">
    <property type="taxonomic scope" value="Bacteria"/>
</dbReference>
<dbReference type="InParanoid" id="Q9WZ72"/>
<dbReference type="OrthoDB" id="9812702at2"/>
<dbReference type="EvolutionaryTrace" id="Q9WZ72"/>
<dbReference type="Proteomes" id="UP000008183">
    <property type="component" value="Chromosome"/>
</dbReference>
<dbReference type="GO" id="GO:0005737">
    <property type="term" value="C:cytoplasm"/>
    <property type="evidence" value="ECO:0007669"/>
    <property type="project" value="UniProtKB-ARBA"/>
</dbReference>
<dbReference type="GO" id="GO:1990904">
    <property type="term" value="C:ribonucleoprotein complex"/>
    <property type="evidence" value="ECO:0007669"/>
    <property type="project" value="UniProtKB-KW"/>
</dbReference>
<dbReference type="GO" id="GO:0005840">
    <property type="term" value="C:ribosome"/>
    <property type="evidence" value="ECO:0007669"/>
    <property type="project" value="UniProtKB-KW"/>
</dbReference>
<dbReference type="GO" id="GO:0070181">
    <property type="term" value="F:small ribosomal subunit rRNA binding"/>
    <property type="evidence" value="ECO:0000318"/>
    <property type="project" value="GO_Central"/>
</dbReference>
<dbReference type="GO" id="GO:0003735">
    <property type="term" value="F:structural constituent of ribosome"/>
    <property type="evidence" value="ECO:0000318"/>
    <property type="project" value="GO_Central"/>
</dbReference>
<dbReference type="GO" id="GO:0006412">
    <property type="term" value="P:translation"/>
    <property type="evidence" value="ECO:0007669"/>
    <property type="project" value="UniProtKB-UniRule"/>
</dbReference>
<dbReference type="CDD" id="cd00473">
    <property type="entry name" value="bS6"/>
    <property type="match status" value="1"/>
</dbReference>
<dbReference type="Gene3D" id="3.30.70.60">
    <property type="match status" value="1"/>
</dbReference>
<dbReference type="HAMAP" id="MF_00360">
    <property type="entry name" value="Ribosomal_bS6"/>
    <property type="match status" value="1"/>
</dbReference>
<dbReference type="InterPro" id="IPR000529">
    <property type="entry name" value="Ribosomal_bS6"/>
</dbReference>
<dbReference type="InterPro" id="IPR035980">
    <property type="entry name" value="Ribosomal_bS6_sf"/>
</dbReference>
<dbReference type="InterPro" id="IPR020814">
    <property type="entry name" value="Ribosomal_S6_plastid/chlpt"/>
</dbReference>
<dbReference type="InterPro" id="IPR014717">
    <property type="entry name" value="Transl_elong_EF1B/ribsomal_bS6"/>
</dbReference>
<dbReference type="NCBIfam" id="TIGR00166">
    <property type="entry name" value="S6"/>
    <property type="match status" value="1"/>
</dbReference>
<dbReference type="PANTHER" id="PTHR21011">
    <property type="entry name" value="MITOCHONDRIAL 28S RIBOSOMAL PROTEIN S6"/>
    <property type="match status" value="1"/>
</dbReference>
<dbReference type="PANTHER" id="PTHR21011:SF1">
    <property type="entry name" value="SMALL RIBOSOMAL SUBUNIT PROTEIN BS6M"/>
    <property type="match status" value="1"/>
</dbReference>
<dbReference type="Pfam" id="PF01250">
    <property type="entry name" value="Ribosomal_S6"/>
    <property type="match status" value="1"/>
</dbReference>
<dbReference type="SUPFAM" id="SSF54995">
    <property type="entry name" value="Ribosomal protein S6"/>
    <property type="match status" value="1"/>
</dbReference>
<comment type="function">
    <text evidence="1">Binds together with bS18 to 16S ribosomal RNA.</text>
</comment>
<comment type="similarity">
    <text evidence="2">Belongs to the bacterial ribosomal protein bS6 family.</text>
</comment>
<proteinExistence type="evidence at protein level"/>
<protein>
    <recommendedName>
        <fullName evidence="2">Small ribosomal subunit protein bS6</fullName>
    </recommendedName>
    <alternativeName>
        <fullName>30S ribosomal protein S6</fullName>
    </alternativeName>
</protein>
<evidence type="ECO:0000250" key="1"/>
<evidence type="ECO:0000305" key="2"/>
<evidence type="ECO:0007829" key="3">
    <source>
        <dbReference type="PDB" id="1VMB"/>
    </source>
</evidence>